<comment type="subcellular location">
    <subcellularLocation>
        <location evidence="4">Secreted</location>
    </subcellularLocation>
</comment>
<comment type="tissue specificity">
    <text evidence="4">Expressed by the venom duct.</text>
</comment>
<comment type="domain">
    <text evidence="1">The presence of a 'disulfide through disulfide knot' structurally defines this protein as a knottin.</text>
</comment>
<comment type="domain">
    <text evidence="3">The cysteine framework is VI/VII (C-C-CC-C-C).</text>
</comment>
<comment type="similarity">
    <text evidence="3">Belongs to the conotoxin I3 superfamily.</text>
</comment>
<keyword id="KW-1015">Disulfide bond</keyword>
<keyword id="KW-0960">Knottin</keyword>
<keyword id="KW-0964">Secreted</keyword>
<keyword id="KW-0732">Signal</keyword>
<keyword id="KW-0800">Toxin</keyword>
<name>I364_CONLT</name>
<proteinExistence type="inferred from homology"/>
<organism>
    <name type="scientific">Conus litteratus</name>
    <name type="common">Lettered cone</name>
    <dbReference type="NCBI Taxonomy" id="89445"/>
    <lineage>
        <taxon>Eukaryota</taxon>
        <taxon>Metazoa</taxon>
        <taxon>Spiralia</taxon>
        <taxon>Lophotrochozoa</taxon>
        <taxon>Mollusca</taxon>
        <taxon>Gastropoda</taxon>
        <taxon>Caenogastropoda</taxon>
        <taxon>Neogastropoda</taxon>
        <taxon>Conoidea</taxon>
        <taxon>Conidae</taxon>
        <taxon>Conus</taxon>
        <taxon>Elisaconus</taxon>
    </lineage>
</organism>
<sequence>MKLVLAIVLILMFLSLSAGAETSDNGVSRGGHRPQYWPVTPPSIVCLRSGEDCENNTPCCPGLSCRVSADLATLKLSLACD</sequence>
<reference key="1">
    <citation type="journal article" date="2009" name="Peptides">
        <title>New conotoxins define the novel I3-superfamily.</title>
        <authorList>
            <person name="Yuan D.D."/>
            <person name="Liu L."/>
            <person name="Shao X.X."/>
            <person name="Peng C."/>
            <person name="Chi C.W."/>
            <person name="Guo Z.Y."/>
        </authorList>
    </citation>
    <scope>NUCLEOTIDE SEQUENCE [MRNA]</scope>
</reference>
<feature type="signal peptide" evidence="2">
    <location>
        <begin position="1"/>
        <end position="19"/>
    </location>
</feature>
<feature type="propeptide" id="PRO_0000392162" evidence="2">
    <location>
        <begin position="20"/>
        <end position="42"/>
    </location>
</feature>
<feature type="peptide" id="PRO_0000392163" description="Conotoxin Lt6.4">
    <location>
        <begin position="43"/>
        <end position="81"/>
    </location>
</feature>
<feature type="disulfide bond" evidence="1">
    <location>
        <begin position="46"/>
        <end position="60"/>
    </location>
</feature>
<feature type="disulfide bond" evidence="1">
    <location>
        <begin position="53"/>
        <end position="65"/>
    </location>
</feature>
<feature type="disulfide bond" evidence="1">
    <location>
        <begin position="59"/>
        <end position="80"/>
    </location>
</feature>
<evidence type="ECO:0000250" key="1"/>
<evidence type="ECO:0000255" key="2"/>
<evidence type="ECO:0000305" key="3"/>
<evidence type="ECO:0000305" key="4">
    <source>
    </source>
</evidence>
<protein>
    <recommendedName>
        <fullName>Conotoxin Lt6.4</fullName>
    </recommendedName>
</protein>
<dbReference type="EMBL" id="FJ531700">
    <property type="protein sequence ID" value="ACU30046.1"/>
    <property type="molecule type" value="mRNA"/>
</dbReference>
<dbReference type="GO" id="GO:0005576">
    <property type="term" value="C:extracellular region"/>
    <property type="evidence" value="ECO:0007669"/>
    <property type="project" value="UniProtKB-SubCell"/>
</dbReference>
<dbReference type="GO" id="GO:0090729">
    <property type="term" value="F:toxin activity"/>
    <property type="evidence" value="ECO:0007669"/>
    <property type="project" value="UniProtKB-KW"/>
</dbReference>
<accession>D2DGD9</accession>